<feature type="chain" id="PRO_1000053702" description="Uracil phosphoribosyltransferase">
    <location>
        <begin position="1"/>
        <end position="209"/>
    </location>
</feature>
<feature type="binding site" evidence="1">
    <location>
        <position position="79"/>
    </location>
    <ligand>
        <name>5-phospho-alpha-D-ribose 1-diphosphate</name>
        <dbReference type="ChEBI" id="CHEBI:58017"/>
    </ligand>
</feature>
<feature type="binding site" evidence="1">
    <location>
        <position position="104"/>
    </location>
    <ligand>
        <name>5-phospho-alpha-D-ribose 1-diphosphate</name>
        <dbReference type="ChEBI" id="CHEBI:58017"/>
    </ligand>
</feature>
<feature type="binding site" evidence="1">
    <location>
        <begin position="131"/>
        <end position="139"/>
    </location>
    <ligand>
        <name>5-phospho-alpha-D-ribose 1-diphosphate</name>
        <dbReference type="ChEBI" id="CHEBI:58017"/>
    </ligand>
</feature>
<feature type="binding site" evidence="1">
    <location>
        <position position="194"/>
    </location>
    <ligand>
        <name>uracil</name>
        <dbReference type="ChEBI" id="CHEBI:17568"/>
    </ligand>
</feature>
<feature type="binding site" evidence="1">
    <location>
        <begin position="199"/>
        <end position="201"/>
    </location>
    <ligand>
        <name>uracil</name>
        <dbReference type="ChEBI" id="CHEBI:17568"/>
    </ligand>
</feature>
<feature type="binding site" evidence="1">
    <location>
        <position position="200"/>
    </location>
    <ligand>
        <name>5-phospho-alpha-D-ribose 1-diphosphate</name>
        <dbReference type="ChEBI" id="CHEBI:58017"/>
    </ligand>
</feature>
<gene>
    <name evidence="1" type="primary">upp</name>
    <name type="ordered locus">CLB_0181</name>
</gene>
<proteinExistence type="inferred from homology"/>
<evidence type="ECO:0000255" key="1">
    <source>
        <dbReference type="HAMAP-Rule" id="MF_01218"/>
    </source>
</evidence>
<comment type="function">
    <text evidence="1">Catalyzes the conversion of uracil and 5-phospho-alpha-D-ribose 1-diphosphate (PRPP) to UMP and diphosphate.</text>
</comment>
<comment type="catalytic activity">
    <reaction evidence="1">
        <text>UMP + diphosphate = 5-phospho-alpha-D-ribose 1-diphosphate + uracil</text>
        <dbReference type="Rhea" id="RHEA:13017"/>
        <dbReference type="ChEBI" id="CHEBI:17568"/>
        <dbReference type="ChEBI" id="CHEBI:33019"/>
        <dbReference type="ChEBI" id="CHEBI:57865"/>
        <dbReference type="ChEBI" id="CHEBI:58017"/>
        <dbReference type="EC" id="2.4.2.9"/>
    </reaction>
</comment>
<comment type="cofactor">
    <cofactor evidence="1">
        <name>Mg(2+)</name>
        <dbReference type="ChEBI" id="CHEBI:18420"/>
    </cofactor>
    <text evidence="1">Binds 1 Mg(2+) ion per subunit. The magnesium is bound as Mg-PRPP.</text>
</comment>
<comment type="activity regulation">
    <text evidence="1">Allosterically activated by GTP.</text>
</comment>
<comment type="pathway">
    <text evidence="1">Pyrimidine metabolism; UMP biosynthesis via salvage pathway; UMP from uracil: step 1/1.</text>
</comment>
<comment type="similarity">
    <text evidence="1">Belongs to the UPRTase family.</text>
</comment>
<dbReference type="EC" id="2.4.2.9" evidence="1"/>
<dbReference type="EMBL" id="CP000726">
    <property type="protein sequence ID" value="ABS32777.1"/>
    <property type="molecule type" value="Genomic_DNA"/>
</dbReference>
<dbReference type="RefSeq" id="WP_003360558.1">
    <property type="nucleotide sequence ID" value="NC_009697.1"/>
</dbReference>
<dbReference type="SMR" id="A7FQG8"/>
<dbReference type="GeneID" id="5184400"/>
<dbReference type="KEGG" id="cba:CLB_0181"/>
<dbReference type="HOGENOM" id="CLU_067096_2_2_9"/>
<dbReference type="UniPathway" id="UPA00574">
    <property type="reaction ID" value="UER00636"/>
</dbReference>
<dbReference type="GO" id="GO:0005525">
    <property type="term" value="F:GTP binding"/>
    <property type="evidence" value="ECO:0007669"/>
    <property type="project" value="UniProtKB-KW"/>
</dbReference>
<dbReference type="GO" id="GO:0000287">
    <property type="term" value="F:magnesium ion binding"/>
    <property type="evidence" value="ECO:0007669"/>
    <property type="project" value="UniProtKB-UniRule"/>
</dbReference>
<dbReference type="GO" id="GO:0004845">
    <property type="term" value="F:uracil phosphoribosyltransferase activity"/>
    <property type="evidence" value="ECO:0007669"/>
    <property type="project" value="UniProtKB-UniRule"/>
</dbReference>
<dbReference type="GO" id="GO:0044206">
    <property type="term" value="P:UMP salvage"/>
    <property type="evidence" value="ECO:0007669"/>
    <property type="project" value="UniProtKB-UniRule"/>
</dbReference>
<dbReference type="GO" id="GO:0006223">
    <property type="term" value="P:uracil salvage"/>
    <property type="evidence" value="ECO:0007669"/>
    <property type="project" value="InterPro"/>
</dbReference>
<dbReference type="CDD" id="cd06223">
    <property type="entry name" value="PRTases_typeI"/>
    <property type="match status" value="1"/>
</dbReference>
<dbReference type="FunFam" id="3.40.50.2020:FF:000003">
    <property type="entry name" value="Uracil phosphoribosyltransferase"/>
    <property type="match status" value="1"/>
</dbReference>
<dbReference type="Gene3D" id="3.40.50.2020">
    <property type="match status" value="1"/>
</dbReference>
<dbReference type="HAMAP" id="MF_01218_B">
    <property type="entry name" value="Upp_B"/>
    <property type="match status" value="1"/>
</dbReference>
<dbReference type="InterPro" id="IPR000836">
    <property type="entry name" value="PRibTrfase_dom"/>
</dbReference>
<dbReference type="InterPro" id="IPR029057">
    <property type="entry name" value="PRTase-like"/>
</dbReference>
<dbReference type="InterPro" id="IPR034332">
    <property type="entry name" value="Upp_B"/>
</dbReference>
<dbReference type="InterPro" id="IPR050054">
    <property type="entry name" value="UPRTase/APRTase"/>
</dbReference>
<dbReference type="InterPro" id="IPR005765">
    <property type="entry name" value="Ura_phspho_trans"/>
</dbReference>
<dbReference type="NCBIfam" id="NF001097">
    <property type="entry name" value="PRK00129.1"/>
    <property type="match status" value="1"/>
</dbReference>
<dbReference type="NCBIfam" id="TIGR01091">
    <property type="entry name" value="upp"/>
    <property type="match status" value="1"/>
</dbReference>
<dbReference type="PANTHER" id="PTHR32315">
    <property type="entry name" value="ADENINE PHOSPHORIBOSYLTRANSFERASE"/>
    <property type="match status" value="1"/>
</dbReference>
<dbReference type="PANTHER" id="PTHR32315:SF4">
    <property type="entry name" value="URACIL PHOSPHORIBOSYLTRANSFERASE, CHLOROPLASTIC"/>
    <property type="match status" value="1"/>
</dbReference>
<dbReference type="Pfam" id="PF14681">
    <property type="entry name" value="UPRTase"/>
    <property type="match status" value="1"/>
</dbReference>
<dbReference type="SUPFAM" id="SSF53271">
    <property type="entry name" value="PRTase-like"/>
    <property type="match status" value="1"/>
</dbReference>
<name>UPP_CLOB1</name>
<reference key="1">
    <citation type="journal article" date="2007" name="PLoS ONE">
        <title>Analysis of the neurotoxin complex genes in Clostridium botulinum A1-A4 and B1 strains: BoNT/A3, /Ba4 and /B1 clusters are located within plasmids.</title>
        <authorList>
            <person name="Smith T.J."/>
            <person name="Hill K.K."/>
            <person name="Foley B.T."/>
            <person name="Detter J.C."/>
            <person name="Munk A.C."/>
            <person name="Bruce D.C."/>
            <person name="Doggett N.A."/>
            <person name="Smith L.A."/>
            <person name="Marks J.D."/>
            <person name="Xie G."/>
            <person name="Brettin T.S."/>
        </authorList>
    </citation>
    <scope>NUCLEOTIDE SEQUENCE [LARGE SCALE GENOMIC DNA]</scope>
    <source>
        <strain>ATCC 19397 / Type A</strain>
    </source>
</reference>
<organism>
    <name type="scientific">Clostridium botulinum (strain ATCC 19397 / Type A)</name>
    <dbReference type="NCBI Taxonomy" id="441770"/>
    <lineage>
        <taxon>Bacteria</taxon>
        <taxon>Bacillati</taxon>
        <taxon>Bacillota</taxon>
        <taxon>Clostridia</taxon>
        <taxon>Eubacteriales</taxon>
        <taxon>Clostridiaceae</taxon>
        <taxon>Clostridium</taxon>
    </lineage>
</organism>
<protein>
    <recommendedName>
        <fullName evidence="1">Uracil phosphoribosyltransferase</fullName>
        <ecNumber evidence="1">2.4.2.9</ecNumber>
    </recommendedName>
    <alternativeName>
        <fullName evidence="1">UMP pyrophosphorylase</fullName>
    </alternativeName>
    <alternativeName>
        <fullName evidence="1">UPRTase</fullName>
    </alternativeName>
</protein>
<accession>A7FQG8</accession>
<sequence length="209" mass="22869">MSKVTQIAHPLILHKLALIRDKNTGSKDFRELVEEVAMLMAYEVTRDLQLKEVEIETPICKTKCKMLSGKKVAIVPILRAGLGMVGGMTSLIPAAKVGHIGLYRDEETLKPVEYFCKLPQDIGDRDVIVTDPMLATGGSAKDAITLLKQKGAKHIRLMCLVAAPEGIKEVMDEHPDVDIYVASVDEKLNEKGYVVPGLGDAGDRLYGTK</sequence>
<keyword id="KW-0021">Allosteric enzyme</keyword>
<keyword id="KW-0328">Glycosyltransferase</keyword>
<keyword id="KW-0342">GTP-binding</keyword>
<keyword id="KW-0460">Magnesium</keyword>
<keyword id="KW-0547">Nucleotide-binding</keyword>
<keyword id="KW-0808">Transferase</keyword>